<reference key="1">
    <citation type="journal article" date="2009" name="J. Bacteriol.">
        <title>Complete genome sequence of the extremophilic Bacillus cereus strain Q1 with industrial applications.</title>
        <authorList>
            <person name="Xiong Z."/>
            <person name="Jiang Y."/>
            <person name="Qi D."/>
            <person name="Lu H."/>
            <person name="Yang F."/>
            <person name="Yang J."/>
            <person name="Chen L."/>
            <person name="Sun L."/>
            <person name="Xu X."/>
            <person name="Xue Y."/>
            <person name="Zhu Y."/>
            <person name="Jin Q."/>
        </authorList>
    </citation>
    <scope>NUCLEOTIDE SEQUENCE [LARGE SCALE GENOMIC DNA]</scope>
    <source>
        <strain>Q1</strain>
    </source>
</reference>
<organism>
    <name type="scientific">Bacillus cereus (strain Q1)</name>
    <dbReference type="NCBI Taxonomy" id="361100"/>
    <lineage>
        <taxon>Bacteria</taxon>
        <taxon>Bacillati</taxon>
        <taxon>Bacillota</taxon>
        <taxon>Bacilli</taxon>
        <taxon>Bacillales</taxon>
        <taxon>Bacillaceae</taxon>
        <taxon>Bacillus</taxon>
        <taxon>Bacillus cereus group</taxon>
    </lineage>
</organism>
<comment type="function">
    <text evidence="1">Acts as a chaperone.</text>
</comment>
<comment type="induction">
    <text evidence="1">By stress conditions e.g. heat shock.</text>
</comment>
<comment type="similarity">
    <text evidence="1">Belongs to the heat shock protein 70 family.</text>
</comment>
<proteinExistence type="inferred from homology"/>
<name>DNAK_BACCQ</name>
<gene>
    <name evidence="1" type="primary">dnaK</name>
    <name type="ordered locus">BCQ_4100</name>
</gene>
<protein>
    <recommendedName>
        <fullName evidence="1">Chaperone protein DnaK</fullName>
    </recommendedName>
    <alternativeName>
        <fullName evidence="1">HSP70</fullName>
    </alternativeName>
    <alternativeName>
        <fullName evidence="1">Heat shock 70 kDa protein</fullName>
    </alternativeName>
    <alternativeName>
        <fullName evidence="1">Heat shock protein 70</fullName>
    </alternativeName>
</protein>
<keyword id="KW-0067">ATP-binding</keyword>
<keyword id="KW-0143">Chaperone</keyword>
<keyword id="KW-0547">Nucleotide-binding</keyword>
<keyword id="KW-0597">Phosphoprotein</keyword>
<keyword id="KW-0346">Stress response</keyword>
<feature type="chain" id="PRO_1000133131" description="Chaperone protein DnaK">
    <location>
        <begin position="1"/>
        <end position="611"/>
    </location>
</feature>
<feature type="region of interest" description="Disordered" evidence="2">
    <location>
        <begin position="579"/>
        <end position="598"/>
    </location>
</feature>
<feature type="compositionally biased region" description="Low complexity" evidence="2">
    <location>
        <begin position="579"/>
        <end position="592"/>
    </location>
</feature>
<feature type="modified residue" description="Phosphothreonine; by autocatalysis" evidence="1">
    <location>
        <position position="173"/>
    </location>
</feature>
<accession>B9IY81</accession>
<sequence>MSKIIGIDLGTTNSCVAVMEGGEPKVIPNPEGNRTTPSVVAFKNEERQVGEVAKRQAITNPNTIMSVKRHMGTDYKVEIEGKEYTPQEISAIILQNLKASAEAYLGETVTKAVITVPAYFNDAERQATKDAGRIAGLEVERIINEPTAAALAYGLEKQDEEQKILVYDLGGGTFDVSILELADGTFEVISTAGDNRLGGDDFDQVIIDHLVAEFKKENNIDLSQDKMALQRLKDAAEKAKKDLSGVTQTQISLPFISAGAAGPLHLELTLTRAKFEELSANLVERTLEPTRRALKDAGLSASELDRVILVGGSTRIPAVQEAIKRETGKEPYKGVNPDEVVALGAAVQGGVLTGDVEGVLLLDVTPLSLGIETMGGVFTKLIERNTTIPTSKSQVFSTAADNQPAVDIHVLQGERPMSADNKTLGRFQLTDIPPAPRGIPQIEVTFDIDANGIVNVRAKDLGTSKEQAITIQSSSGLSDEEVDRMVKEAEANADADQKRKEEVELRNEADQLVFQTDKVVKDLEGKVDAAEVAKATEAKEALQAAIEKNELEEIRAKKDALQEIVQQLTVKLYEQAQAAAGQAEGAQGAQDAGAKKDNVVDAEFEEVKEDK</sequence>
<evidence type="ECO:0000255" key="1">
    <source>
        <dbReference type="HAMAP-Rule" id="MF_00332"/>
    </source>
</evidence>
<evidence type="ECO:0000256" key="2">
    <source>
        <dbReference type="SAM" id="MobiDB-lite"/>
    </source>
</evidence>
<dbReference type="EMBL" id="CP000227">
    <property type="protein sequence ID" value="ACM14527.1"/>
    <property type="molecule type" value="Genomic_DNA"/>
</dbReference>
<dbReference type="SMR" id="B9IY81"/>
<dbReference type="KEGG" id="bcq:BCQ_4100"/>
<dbReference type="HOGENOM" id="CLU_005965_2_4_9"/>
<dbReference type="Proteomes" id="UP000000441">
    <property type="component" value="Chromosome"/>
</dbReference>
<dbReference type="GO" id="GO:0005524">
    <property type="term" value="F:ATP binding"/>
    <property type="evidence" value="ECO:0007669"/>
    <property type="project" value="UniProtKB-UniRule"/>
</dbReference>
<dbReference type="GO" id="GO:0140662">
    <property type="term" value="F:ATP-dependent protein folding chaperone"/>
    <property type="evidence" value="ECO:0007669"/>
    <property type="project" value="InterPro"/>
</dbReference>
<dbReference type="GO" id="GO:0051082">
    <property type="term" value="F:unfolded protein binding"/>
    <property type="evidence" value="ECO:0007669"/>
    <property type="project" value="InterPro"/>
</dbReference>
<dbReference type="CDD" id="cd10234">
    <property type="entry name" value="ASKHA_NBD_HSP70_DnaK-like"/>
    <property type="match status" value="1"/>
</dbReference>
<dbReference type="FunFam" id="2.60.34.10:FF:000014">
    <property type="entry name" value="Chaperone protein DnaK HSP70"/>
    <property type="match status" value="1"/>
</dbReference>
<dbReference type="FunFam" id="1.20.1270.10:FF:000004">
    <property type="entry name" value="Molecular chaperone DnaK"/>
    <property type="match status" value="1"/>
</dbReference>
<dbReference type="FunFam" id="3.30.420.40:FF:000071">
    <property type="entry name" value="Molecular chaperone DnaK"/>
    <property type="match status" value="1"/>
</dbReference>
<dbReference type="FunFam" id="3.90.640.10:FF:000003">
    <property type="entry name" value="Molecular chaperone DnaK"/>
    <property type="match status" value="1"/>
</dbReference>
<dbReference type="Gene3D" id="1.20.1270.10">
    <property type="match status" value="1"/>
</dbReference>
<dbReference type="Gene3D" id="3.30.420.40">
    <property type="match status" value="2"/>
</dbReference>
<dbReference type="Gene3D" id="3.90.640.10">
    <property type="entry name" value="Actin, Chain A, domain 4"/>
    <property type="match status" value="1"/>
</dbReference>
<dbReference type="Gene3D" id="2.60.34.10">
    <property type="entry name" value="Substrate Binding Domain Of DNAk, Chain A, domain 1"/>
    <property type="match status" value="1"/>
</dbReference>
<dbReference type="HAMAP" id="MF_00332">
    <property type="entry name" value="DnaK"/>
    <property type="match status" value="1"/>
</dbReference>
<dbReference type="InterPro" id="IPR043129">
    <property type="entry name" value="ATPase_NBD"/>
</dbReference>
<dbReference type="InterPro" id="IPR012725">
    <property type="entry name" value="Chaperone_DnaK"/>
</dbReference>
<dbReference type="InterPro" id="IPR018181">
    <property type="entry name" value="Heat_shock_70_CS"/>
</dbReference>
<dbReference type="InterPro" id="IPR029048">
    <property type="entry name" value="HSP70_C_sf"/>
</dbReference>
<dbReference type="InterPro" id="IPR029047">
    <property type="entry name" value="HSP70_peptide-bd_sf"/>
</dbReference>
<dbReference type="InterPro" id="IPR013126">
    <property type="entry name" value="Hsp_70_fam"/>
</dbReference>
<dbReference type="NCBIfam" id="NF001413">
    <property type="entry name" value="PRK00290.1"/>
    <property type="match status" value="1"/>
</dbReference>
<dbReference type="NCBIfam" id="TIGR02350">
    <property type="entry name" value="prok_dnaK"/>
    <property type="match status" value="1"/>
</dbReference>
<dbReference type="PANTHER" id="PTHR19375">
    <property type="entry name" value="HEAT SHOCK PROTEIN 70KDA"/>
    <property type="match status" value="1"/>
</dbReference>
<dbReference type="Pfam" id="PF00012">
    <property type="entry name" value="HSP70"/>
    <property type="match status" value="1"/>
</dbReference>
<dbReference type="PRINTS" id="PR00301">
    <property type="entry name" value="HEATSHOCK70"/>
</dbReference>
<dbReference type="SUPFAM" id="SSF53067">
    <property type="entry name" value="Actin-like ATPase domain"/>
    <property type="match status" value="2"/>
</dbReference>
<dbReference type="SUPFAM" id="SSF100934">
    <property type="entry name" value="Heat shock protein 70kD (HSP70), C-terminal subdomain"/>
    <property type="match status" value="1"/>
</dbReference>
<dbReference type="SUPFAM" id="SSF100920">
    <property type="entry name" value="Heat shock protein 70kD (HSP70), peptide-binding domain"/>
    <property type="match status" value="1"/>
</dbReference>
<dbReference type="PROSITE" id="PS00297">
    <property type="entry name" value="HSP70_1"/>
    <property type="match status" value="1"/>
</dbReference>
<dbReference type="PROSITE" id="PS00329">
    <property type="entry name" value="HSP70_2"/>
    <property type="match status" value="1"/>
</dbReference>
<dbReference type="PROSITE" id="PS01036">
    <property type="entry name" value="HSP70_3"/>
    <property type="match status" value="1"/>
</dbReference>